<keyword id="KW-0687">Ribonucleoprotein</keyword>
<keyword id="KW-0689">Ribosomal protein</keyword>
<keyword id="KW-0694">RNA-binding</keyword>
<keyword id="KW-0699">rRNA-binding</keyword>
<gene>
    <name evidence="1" type="primary">rplO</name>
    <name type="ordered locus">YPDSF_0151</name>
</gene>
<dbReference type="EMBL" id="CP000668">
    <property type="protein sequence ID" value="ABP38573.1"/>
    <property type="molecule type" value="Genomic_DNA"/>
</dbReference>
<dbReference type="RefSeq" id="WP_002213341.1">
    <property type="nucleotide sequence ID" value="NZ_CP009715.1"/>
</dbReference>
<dbReference type="SMR" id="A4TH10"/>
<dbReference type="GeneID" id="96663177"/>
<dbReference type="KEGG" id="ypp:YPDSF_0151"/>
<dbReference type="PATRIC" id="fig|386656.14.peg.415"/>
<dbReference type="GO" id="GO:0022625">
    <property type="term" value="C:cytosolic large ribosomal subunit"/>
    <property type="evidence" value="ECO:0007669"/>
    <property type="project" value="TreeGrafter"/>
</dbReference>
<dbReference type="GO" id="GO:0019843">
    <property type="term" value="F:rRNA binding"/>
    <property type="evidence" value="ECO:0007669"/>
    <property type="project" value="UniProtKB-UniRule"/>
</dbReference>
<dbReference type="GO" id="GO:0003735">
    <property type="term" value="F:structural constituent of ribosome"/>
    <property type="evidence" value="ECO:0007669"/>
    <property type="project" value="InterPro"/>
</dbReference>
<dbReference type="GO" id="GO:0006412">
    <property type="term" value="P:translation"/>
    <property type="evidence" value="ECO:0007669"/>
    <property type="project" value="UniProtKB-UniRule"/>
</dbReference>
<dbReference type="FunFam" id="3.100.10.10:FF:000003">
    <property type="entry name" value="50S ribosomal protein L15"/>
    <property type="match status" value="1"/>
</dbReference>
<dbReference type="Gene3D" id="3.100.10.10">
    <property type="match status" value="1"/>
</dbReference>
<dbReference type="HAMAP" id="MF_01341">
    <property type="entry name" value="Ribosomal_uL15"/>
    <property type="match status" value="1"/>
</dbReference>
<dbReference type="InterPro" id="IPR030878">
    <property type="entry name" value="Ribosomal_uL15"/>
</dbReference>
<dbReference type="InterPro" id="IPR021131">
    <property type="entry name" value="Ribosomal_uL15/eL18"/>
</dbReference>
<dbReference type="InterPro" id="IPR036227">
    <property type="entry name" value="Ribosomal_uL15/eL18_sf"/>
</dbReference>
<dbReference type="InterPro" id="IPR005749">
    <property type="entry name" value="Ribosomal_uL15_bac-type"/>
</dbReference>
<dbReference type="InterPro" id="IPR001196">
    <property type="entry name" value="Ribosomal_uL15_CS"/>
</dbReference>
<dbReference type="NCBIfam" id="TIGR01071">
    <property type="entry name" value="rplO_bact"/>
    <property type="match status" value="1"/>
</dbReference>
<dbReference type="PANTHER" id="PTHR12934">
    <property type="entry name" value="50S RIBOSOMAL PROTEIN L15"/>
    <property type="match status" value="1"/>
</dbReference>
<dbReference type="PANTHER" id="PTHR12934:SF11">
    <property type="entry name" value="LARGE RIBOSOMAL SUBUNIT PROTEIN UL15M"/>
    <property type="match status" value="1"/>
</dbReference>
<dbReference type="Pfam" id="PF00828">
    <property type="entry name" value="Ribosomal_L27A"/>
    <property type="match status" value="1"/>
</dbReference>
<dbReference type="SUPFAM" id="SSF52080">
    <property type="entry name" value="Ribosomal proteins L15p and L18e"/>
    <property type="match status" value="1"/>
</dbReference>
<dbReference type="PROSITE" id="PS00475">
    <property type="entry name" value="RIBOSOMAL_L15"/>
    <property type="match status" value="1"/>
</dbReference>
<sequence>MRLNTLSPAEGAKHAPKRVGRGIGSGLGKTAGRGHKGQNSRSGGGVRRGFEGGQMPLYRRLPKFGFTSRKAMITAEVRLSELALVEGDVIDLNTLKAANVVGIQMEFVKVILSGEVNRAVTLRGLRVTKGARAAIEAAGGKIEE</sequence>
<proteinExistence type="inferred from homology"/>
<accession>A4TH10</accession>
<organism>
    <name type="scientific">Yersinia pestis (strain Pestoides F)</name>
    <dbReference type="NCBI Taxonomy" id="386656"/>
    <lineage>
        <taxon>Bacteria</taxon>
        <taxon>Pseudomonadati</taxon>
        <taxon>Pseudomonadota</taxon>
        <taxon>Gammaproteobacteria</taxon>
        <taxon>Enterobacterales</taxon>
        <taxon>Yersiniaceae</taxon>
        <taxon>Yersinia</taxon>
    </lineage>
</organism>
<feature type="chain" id="PRO_1000054566" description="Large ribosomal subunit protein uL15">
    <location>
        <begin position="1"/>
        <end position="144"/>
    </location>
</feature>
<feature type="region of interest" description="Disordered" evidence="2">
    <location>
        <begin position="1"/>
        <end position="52"/>
    </location>
</feature>
<feature type="compositionally biased region" description="Gly residues" evidence="2">
    <location>
        <begin position="21"/>
        <end position="31"/>
    </location>
</feature>
<protein>
    <recommendedName>
        <fullName evidence="1">Large ribosomal subunit protein uL15</fullName>
    </recommendedName>
    <alternativeName>
        <fullName evidence="3">50S ribosomal protein L15</fullName>
    </alternativeName>
</protein>
<reference key="1">
    <citation type="submission" date="2007-02" db="EMBL/GenBank/DDBJ databases">
        <title>Complete sequence of chromosome of Yersinia pestis Pestoides F.</title>
        <authorList>
            <consortium name="US DOE Joint Genome Institute"/>
            <person name="Copeland A."/>
            <person name="Lucas S."/>
            <person name="Lapidus A."/>
            <person name="Barry K."/>
            <person name="Detter J.C."/>
            <person name="Glavina del Rio T."/>
            <person name="Hammon N."/>
            <person name="Israni S."/>
            <person name="Dalin E."/>
            <person name="Tice H."/>
            <person name="Pitluck S."/>
            <person name="Di Bartolo G."/>
            <person name="Chain P."/>
            <person name="Malfatti S."/>
            <person name="Shin M."/>
            <person name="Vergez L."/>
            <person name="Schmutz J."/>
            <person name="Larimer F."/>
            <person name="Land M."/>
            <person name="Hauser L."/>
            <person name="Worsham P."/>
            <person name="Chu M."/>
            <person name="Bearden S."/>
            <person name="Garcia E."/>
            <person name="Richardson P."/>
        </authorList>
    </citation>
    <scope>NUCLEOTIDE SEQUENCE [LARGE SCALE GENOMIC DNA]</scope>
    <source>
        <strain>Pestoides F</strain>
    </source>
</reference>
<comment type="function">
    <text evidence="1">Binds to the 23S rRNA.</text>
</comment>
<comment type="subunit">
    <text evidence="1">Part of the 50S ribosomal subunit.</text>
</comment>
<comment type="similarity">
    <text evidence="1">Belongs to the universal ribosomal protein uL15 family.</text>
</comment>
<name>RL15_YERPP</name>
<evidence type="ECO:0000255" key="1">
    <source>
        <dbReference type="HAMAP-Rule" id="MF_01341"/>
    </source>
</evidence>
<evidence type="ECO:0000256" key="2">
    <source>
        <dbReference type="SAM" id="MobiDB-lite"/>
    </source>
</evidence>
<evidence type="ECO:0000305" key="3"/>